<gene>
    <name evidence="1" type="primary">nrdR</name>
    <name type="ordered locus">Amet_2868</name>
</gene>
<keyword id="KW-0067">ATP-binding</keyword>
<keyword id="KW-0238">DNA-binding</keyword>
<keyword id="KW-0479">Metal-binding</keyword>
<keyword id="KW-0547">Nucleotide-binding</keyword>
<keyword id="KW-1185">Reference proteome</keyword>
<keyword id="KW-0678">Repressor</keyword>
<keyword id="KW-0804">Transcription</keyword>
<keyword id="KW-0805">Transcription regulation</keyword>
<keyword id="KW-0862">Zinc</keyword>
<keyword id="KW-0863">Zinc-finger</keyword>
<accession>A6TS50</accession>
<name>NRDR_ALKMQ</name>
<protein>
    <recommendedName>
        <fullName evidence="1">Transcriptional repressor NrdR</fullName>
    </recommendedName>
</protein>
<comment type="function">
    <text evidence="1">Negatively regulates transcription of bacterial ribonucleotide reductase nrd genes and operons by binding to NrdR-boxes.</text>
</comment>
<comment type="cofactor">
    <cofactor evidence="1">
        <name>Zn(2+)</name>
        <dbReference type="ChEBI" id="CHEBI:29105"/>
    </cofactor>
    <text evidence="1">Binds 1 zinc ion.</text>
</comment>
<comment type="similarity">
    <text evidence="1">Belongs to the NrdR family.</text>
</comment>
<proteinExistence type="inferred from homology"/>
<organism>
    <name type="scientific">Alkaliphilus metalliredigens (strain QYMF)</name>
    <dbReference type="NCBI Taxonomy" id="293826"/>
    <lineage>
        <taxon>Bacteria</taxon>
        <taxon>Bacillati</taxon>
        <taxon>Bacillota</taxon>
        <taxon>Clostridia</taxon>
        <taxon>Peptostreptococcales</taxon>
        <taxon>Natronincolaceae</taxon>
        <taxon>Alkaliphilus</taxon>
    </lineage>
</organism>
<dbReference type="EMBL" id="CP000724">
    <property type="protein sequence ID" value="ABR49018.1"/>
    <property type="molecule type" value="Genomic_DNA"/>
</dbReference>
<dbReference type="RefSeq" id="WP_012063986.1">
    <property type="nucleotide sequence ID" value="NC_009633.1"/>
</dbReference>
<dbReference type="SMR" id="A6TS50"/>
<dbReference type="STRING" id="293826.Amet_2868"/>
<dbReference type="KEGG" id="amt:Amet_2868"/>
<dbReference type="eggNOG" id="COG1327">
    <property type="taxonomic scope" value="Bacteria"/>
</dbReference>
<dbReference type="HOGENOM" id="CLU_108412_0_0_9"/>
<dbReference type="OrthoDB" id="9807461at2"/>
<dbReference type="Proteomes" id="UP000001572">
    <property type="component" value="Chromosome"/>
</dbReference>
<dbReference type="GO" id="GO:0005524">
    <property type="term" value="F:ATP binding"/>
    <property type="evidence" value="ECO:0007669"/>
    <property type="project" value="UniProtKB-KW"/>
</dbReference>
<dbReference type="GO" id="GO:0003677">
    <property type="term" value="F:DNA binding"/>
    <property type="evidence" value="ECO:0007669"/>
    <property type="project" value="UniProtKB-KW"/>
</dbReference>
<dbReference type="GO" id="GO:0008270">
    <property type="term" value="F:zinc ion binding"/>
    <property type="evidence" value="ECO:0007669"/>
    <property type="project" value="UniProtKB-UniRule"/>
</dbReference>
<dbReference type="GO" id="GO:0045892">
    <property type="term" value="P:negative regulation of DNA-templated transcription"/>
    <property type="evidence" value="ECO:0007669"/>
    <property type="project" value="UniProtKB-UniRule"/>
</dbReference>
<dbReference type="HAMAP" id="MF_00440">
    <property type="entry name" value="NrdR"/>
    <property type="match status" value="1"/>
</dbReference>
<dbReference type="InterPro" id="IPR005144">
    <property type="entry name" value="ATP-cone_dom"/>
</dbReference>
<dbReference type="InterPro" id="IPR055173">
    <property type="entry name" value="NrdR-like_N"/>
</dbReference>
<dbReference type="InterPro" id="IPR003796">
    <property type="entry name" value="RNR_NrdR-like"/>
</dbReference>
<dbReference type="NCBIfam" id="TIGR00244">
    <property type="entry name" value="transcriptional regulator NrdR"/>
    <property type="match status" value="1"/>
</dbReference>
<dbReference type="PANTHER" id="PTHR30455">
    <property type="entry name" value="TRANSCRIPTIONAL REPRESSOR NRDR"/>
    <property type="match status" value="1"/>
</dbReference>
<dbReference type="PANTHER" id="PTHR30455:SF2">
    <property type="entry name" value="TRANSCRIPTIONAL REPRESSOR NRDR"/>
    <property type="match status" value="1"/>
</dbReference>
<dbReference type="Pfam" id="PF03477">
    <property type="entry name" value="ATP-cone"/>
    <property type="match status" value="1"/>
</dbReference>
<dbReference type="Pfam" id="PF22811">
    <property type="entry name" value="Zn_ribbon_NrdR"/>
    <property type="match status" value="1"/>
</dbReference>
<dbReference type="PROSITE" id="PS51161">
    <property type="entry name" value="ATP_CONE"/>
    <property type="match status" value="1"/>
</dbReference>
<feature type="chain" id="PRO_1000080704" description="Transcriptional repressor NrdR">
    <location>
        <begin position="1"/>
        <end position="155"/>
    </location>
</feature>
<feature type="domain" description="ATP-cone" evidence="1">
    <location>
        <begin position="49"/>
        <end position="139"/>
    </location>
</feature>
<feature type="zinc finger region" evidence="1">
    <location>
        <begin position="3"/>
        <end position="34"/>
    </location>
</feature>
<reference key="1">
    <citation type="journal article" date="2016" name="Genome Announc.">
        <title>Complete genome sequence of Alkaliphilus metalliredigens strain QYMF, an alkaliphilic and metal-reducing bacterium isolated from borax-contaminated leachate ponds.</title>
        <authorList>
            <person name="Hwang C."/>
            <person name="Copeland A."/>
            <person name="Lucas S."/>
            <person name="Lapidus A."/>
            <person name="Barry K."/>
            <person name="Detter J.C."/>
            <person name="Glavina Del Rio T."/>
            <person name="Hammon N."/>
            <person name="Israni S."/>
            <person name="Dalin E."/>
            <person name="Tice H."/>
            <person name="Pitluck S."/>
            <person name="Chertkov O."/>
            <person name="Brettin T."/>
            <person name="Bruce D."/>
            <person name="Han C."/>
            <person name="Schmutz J."/>
            <person name="Larimer F."/>
            <person name="Land M.L."/>
            <person name="Hauser L."/>
            <person name="Kyrpides N."/>
            <person name="Mikhailova N."/>
            <person name="Ye Q."/>
            <person name="Zhou J."/>
            <person name="Richardson P."/>
            <person name="Fields M.W."/>
        </authorList>
    </citation>
    <scope>NUCLEOTIDE SEQUENCE [LARGE SCALE GENOMIC DNA]</scope>
    <source>
        <strain>QYMF</strain>
    </source>
</reference>
<evidence type="ECO:0000255" key="1">
    <source>
        <dbReference type="HAMAP-Rule" id="MF_00440"/>
    </source>
</evidence>
<sequence>MNCPFCSHFESKVVDSRPTDEGQAIRRRRECVSCHKRFTTYEKIEEIPLIVVKKSGNRESFNRNKVLNGMIRACEKRPVPLNKIEAIVDHIEKQLYNSMEKEITTEFIGTLVIDQIKQLDEVAYVRFASVYREFKDINTFMDELKKLLKEKPEEA</sequence>